<accession>Q2S908</accession>
<proteinExistence type="inferred from homology"/>
<protein>
    <recommendedName>
        <fullName evidence="1">Small ribosomal subunit protein uS7</fullName>
    </recommendedName>
    <alternativeName>
        <fullName evidence="2">30S ribosomal protein S7</fullName>
    </alternativeName>
</protein>
<name>RS7_HAHCH</name>
<feature type="chain" id="PRO_0000241758" description="Small ribosomal subunit protein uS7">
    <location>
        <begin position="1"/>
        <end position="156"/>
    </location>
</feature>
<evidence type="ECO:0000255" key="1">
    <source>
        <dbReference type="HAMAP-Rule" id="MF_00480"/>
    </source>
</evidence>
<evidence type="ECO:0000305" key="2"/>
<comment type="function">
    <text evidence="1">One of the primary rRNA binding proteins, it binds directly to 16S rRNA where it nucleates assembly of the head domain of the 30S subunit. Is located at the subunit interface close to the decoding center, probably blocks exit of the E-site tRNA.</text>
</comment>
<comment type="subunit">
    <text evidence="1">Part of the 30S ribosomal subunit. Contacts proteins S9 and S11.</text>
</comment>
<comment type="similarity">
    <text evidence="1">Belongs to the universal ribosomal protein uS7 family.</text>
</comment>
<organism>
    <name type="scientific">Hahella chejuensis (strain KCTC 2396)</name>
    <dbReference type="NCBI Taxonomy" id="349521"/>
    <lineage>
        <taxon>Bacteria</taxon>
        <taxon>Pseudomonadati</taxon>
        <taxon>Pseudomonadota</taxon>
        <taxon>Gammaproteobacteria</taxon>
        <taxon>Oceanospirillales</taxon>
        <taxon>Hahellaceae</taxon>
        <taxon>Hahella</taxon>
    </lineage>
</organism>
<sequence length="156" mass="17710">MPRRRVAAKREILPDPKFGSKKLAKFINHVMESGKKSVAERIVYGALDIVSNKAKKEPIETFELALENIQPLVEVKSRRVGGATYQVPVEVRPSRQMALSMRWLVEYSRKRGEKSMAARLAAEMLEAAEGRGAAVKKREDVHRMAEANKAFSHYRF</sequence>
<keyword id="KW-1185">Reference proteome</keyword>
<keyword id="KW-0687">Ribonucleoprotein</keyword>
<keyword id="KW-0689">Ribosomal protein</keyword>
<keyword id="KW-0694">RNA-binding</keyword>
<keyword id="KW-0699">rRNA-binding</keyword>
<keyword id="KW-0820">tRNA-binding</keyword>
<dbReference type="EMBL" id="CP000155">
    <property type="protein sequence ID" value="ABC32866.1"/>
    <property type="molecule type" value="Genomic_DNA"/>
</dbReference>
<dbReference type="RefSeq" id="WP_011399924.1">
    <property type="nucleotide sequence ID" value="NC_007645.1"/>
</dbReference>
<dbReference type="SMR" id="Q2S908"/>
<dbReference type="STRING" id="349521.HCH_06221"/>
<dbReference type="KEGG" id="hch:HCH_06221"/>
<dbReference type="eggNOG" id="COG0049">
    <property type="taxonomic scope" value="Bacteria"/>
</dbReference>
<dbReference type="HOGENOM" id="CLU_072226_1_1_6"/>
<dbReference type="OrthoDB" id="9807653at2"/>
<dbReference type="Proteomes" id="UP000000238">
    <property type="component" value="Chromosome"/>
</dbReference>
<dbReference type="GO" id="GO:0015935">
    <property type="term" value="C:small ribosomal subunit"/>
    <property type="evidence" value="ECO:0007669"/>
    <property type="project" value="InterPro"/>
</dbReference>
<dbReference type="GO" id="GO:0019843">
    <property type="term" value="F:rRNA binding"/>
    <property type="evidence" value="ECO:0007669"/>
    <property type="project" value="UniProtKB-UniRule"/>
</dbReference>
<dbReference type="GO" id="GO:0003735">
    <property type="term" value="F:structural constituent of ribosome"/>
    <property type="evidence" value="ECO:0007669"/>
    <property type="project" value="InterPro"/>
</dbReference>
<dbReference type="GO" id="GO:0000049">
    <property type="term" value="F:tRNA binding"/>
    <property type="evidence" value="ECO:0007669"/>
    <property type="project" value="UniProtKB-UniRule"/>
</dbReference>
<dbReference type="GO" id="GO:0006412">
    <property type="term" value="P:translation"/>
    <property type="evidence" value="ECO:0007669"/>
    <property type="project" value="UniProtKB-UniRule"/>
</dbReference>
<dbReference type="CDD" id="cd14869">
    <property type="entry name" value="uS7_Bacteria"/>
    <property type="match status" value="1"/>
</dbReference>
<dbReference type="FunFam" id="1.10.455.10:FF:000001">
    <property type="entry name" value="30S ribosomal protein S7"/>
    <property type="match status" value="1"/>
</dbReference>
<dbReference type="Gene3D" id="1.10.455.10">
    <property type="entry name" value="Ribosomal protein S7 domain"/>
    <property type="match status" value="1"/>
</dbReference>
<dbReference type="HAMAP" id="MF_00480_B">
    <property type="entry name" value="Ribosomal_uS7_B"/>
    <property type="match status" value="1"/>
</dbReference>
<dbReference type="InterPro" id="IPR000235">
    <property type="entry name" value="Ribosomal_uS7"/>
</dbReference>
<dbReference type="InterPro" id="IPR005717">
    <property type="entry name" value="Ribosomal_uS7_bac/org-type"/>
</dbReference>
<dbReference type="InterPro" id="IPR023798">
    <property type="entry name" value="Ribosomal_uS7_dom"/>
</dbReference>
<dbReference type="InterPro" id="IPR036823">
    <property type="entry name" value="Ribosomal_uS7_dom_sf"/>
</dbReference>
<dbReference type="NCBIfam" id="TIGR01029">
    <property type="entry name" value="rpsG_bact"/>
    <property type="match status" value="1"/>
</dbReference>
<dbReference type="PANTHER" id="PTHR11205">
    <property type="entry name" value="RIBOSOMAL PROTEIN S7"/>
    <property type="match status" value="1"/>
</dbReference>
<dbReference type="Pfam" id="PF00177">
    <property type="entry name" value="Ribosomal_S7"/>
    <property type="match status" value="1"/>
</dbReference>
<dbReference type="PIRSF" id="PIRSF002122">
    <property type="entry name" value="RPS7p_RPS7a_RPS5e_RPS7o"/>
    <property type="match status" value="1"/>
</dbReference>
<dbReference type="SUPFAM" id="SSF47973">
    <property type="entry name" value="Ribosomal protein S7"/>
    <property type="match status" value="1"/>
</dbReference>
<reference key="1">
    <citation type="journal article" date="2005" name="Nucleic Acids Res.">
        <title>Genomic blueprint of Hahella chejuensis, a marine microbe producing an algicidal agent.</title>
        <authorList>
            <person name="Jeong H."/>
            <person name="Yim J.H."/>
            <person name="Lee C."/>
            <person name="Choi S.-H."/>
            <person name="Park Y.K."/>
            <person name="Yoon S.H."/>
            <person name="Hur C.-G."/>
            <person name="Kang H.-Y."/>
            <person name="Kim D."/>
            <person name="Lee H.H."/>
            <person name="Park K.H."/>
            <person name="Park S.-H."/>
            <person name="Park H.-S."/>
            <person name="Lee H.K."/>
            <person name="Oh T.K."/>
            <person name="Kim J.F."/>
        </authorList>
    </citation>
    <scope>NUCLEOTIDE SEQUENCE [LARGE SCALE GENOMIC DNA]</scope>
    <source>
        <strain>KCTC 2396</strain>
    </source>
</reference>
<gene>
    <name evidence="1" type="primary">rpsG</name>
    <name type="ordered locus">HCH_06221</name>
</gene>